<dbReference type="EMBL" id="CP001392">
    <property type="protein sequence ID" value="ACM31869.1"/>
    <property type="molecule type" value="Genomic_DNA"/>
</dbReference>
<dbReference type="RefSeq" id="WP_011803855.1">
    <property type="nucleotide sequence ID" value="NC_011992.1"/>
</dbReference>
<dbReference type="SMR" id="B9MBU9"/>
<dbReference type="GeneID" id="84683101"/>
<dbReference type="KEGG" id="dia:Dtpsy_0385"/>
<dbReference type="eggNOG" id="COG0094">
    <property type="taxonomic scope" value="Bacteria"/>
</dbReference>
<dbReference type="HOGENOM" id="CLU_061015_2_1_4"/>
<dbReference type="Proteomes" id="UP000000450">
    <property type="component" value="Chromosome"/>
</dbReference>
<dbReference type="GO" id="GO:1990904">
    <property type="term" value="C:ribonucleoprotein complex"/>
    <property type="evidence" value="ECO:0007669"/>
    <property type="project" value="UniProtKB-KW"/>
</dbReference>
<dbReference type="GO" id="GO:0005840">
    <property type="term" value="C:ribosome"/>
    <property type="evidence" value="ECO:0007669"/>
    <property type="project" value="UniProtKB-KW"/>
</dbReference>
<dbReference type="GO" id="GO:0019843">
    <property type="term" value="F:rRNA binding"/>
    <property type="evidence" value="ECO:0007669"/>
    <property type="project" value="UniProtKB-UniRule"/>
</dbReference>
<dbReference type="GO" id="GO:0003735">
    <property type="term" value="F:structural constituent of ribosome"/>
    <property type="evidence" value="ECO:0007669"/>
    <property type="project" value="InterPro"/>
</dbReference>
<dbReference type="GO" id="GO:0000049">
    <property type="term" value="F:tRNA binding"/>
    <property type="evidence" value="ECO:0007669"/>
    <property type="project" value="UniProtKB-UniRule"/>
</dbReference>
<dbReference type="GO" id="GO:0006412">
    <property type="term" value="P:translation"/>
    <property type="evidence" value="ECO:0007669"/>
    <property type="project" value="UniProtKB-UniRule"/>
</dbReference>
<dbReference type="FunFam" id="3.30.1440.10:FF:000001">
    <property type="entry name" value="50S ribosomal protein L5"/>
    <property type="match status" value="1"/>
</dbReference>
<dbReference type="Gene3D" id="3.30.1440.10">
    <property type="match status" value="1"/>
</dbReference>
<dbReference type="HAMAP" id="MF_01333_B">
    <property type="entry name" value="Ribosomal_uL5_B"/>
    <property type="match status" value="1"/>
</dbReference>
<dbReference type="InterPro" id="IPR002132">
    <property type="entry name" value="Ribosomal_uL5"/>
</dbReference>
<dbReference type="InterPro" id="IPR020930">
    <property type="entry name" value="Ribosomal_uL5_bac-type"/>
</dbReference>
<dbReference type="InterPro" id="IPR031309">
    <property type="entry name" value="Ribosomal_uL5_C"/>
</dbReference>
<dbReference type="InterPro" id="IPR020929">
    <property type="entry name" value="Ribosomal_uL5_CS"/>
</dbReference>
<dbReference type="InterPro" id="IPR022803">
    <property type="entry name" value="Ribosomal_uL5_dom_sf"/>
</dbReference>
<dbReference type="InterPro" id="IPR031310">
    <property type="entry name" value="Ribosomal_uL5_N"/>
</dbReference>
<dbReference type="NCBIfam" id="NF000585">
    <property type="entry name" value="PRK00010.1"/>
    <property type="match status" value="1"/>
</dbReference>
<dbReference type="PANTHER" id="PTHR11994">
    <property type="entry name" value="60S RIBOSOMAL PROTEIN L11-RELATED"/>
    <property type="match status" value="1"/>
</dbReference>
<dbReference type="Pfam" id="PF00281">
    <property type="entry name" value="Ribosomal_L5"/>
    <property type="match status" value="1"/>
</dbReference>
<dbReference type="Pfam" id="PF00673">
    <property type="entry name" value="Ribosomal_L5_C"/>
    <property type="match status" value="1"/>
</dbReference>
<dbReference type="PIRSF" id="PIRSF002161">
    <property type="entry name" value="Ribosomal_L5"/>
    <property type="match status" value="1"/>
</dbReference>
<dbReference type="SUPFAM" id="SSF55282">
    <property type="entry name" value="RL5-like"/>
    <property type="match status" value="1"/>
</dbReference>
<dbReference type="PROSITE" id="PS00358">
    <property type="entry name" value="RIBOSOMAL_L5"/>
    <property type="match status" value="1"/>
</dbReference>
<protein>
    <recommendedName>
        <fullName evidence="1">Large ribosomal subunit protein uL5</fullName>
    </recommendedName>
    <alternativeName>
        <fullName evidence="2">50S ribosomal protein L5</fullName>
    </alternativeName>
</protein>
<evidence type="ECO:0000255" key="1">
    <source>
        <dbReference type="HAMAP-Rule" id="MF_01333"/>
    </source>
</evidence>
<evidence type="ECO:0000305" key="2"/>
<feature type="chain" id="PRO_1000166130" description="Large ribosomal subunit protein uL5">
    <location>
        <begin position="1"/>
        <end position="179"/>
    </location>
</feature>
<proteinExistence type="inferred from homology"/>
<name>RL5_ACIET</name>
<organism>
    <name type="scientific">Acidovorax ebreus (strain TPSY)</name>
    <name type="common">Diaphorobacter sp. (strain TPSY)</name>
    <dbReference type="NCBI Taxonomy" id="535289"/>
    <lineage>
        <taxon>Bacteria</taxon>
        <taxon>Pseudomonadati</taxon>
        <taxon>Pseudomonadota</taxon>
        <taxon>Betaproteobacteria</taxon>
        <taxon>Burkholderiales</taxon>
        <taxon>Comamonadaceae</taxon>
        <taxon>Diaphorobacter</taxon>
    </lineage>
</organism>
<reference key="1">
    <citation type="submission" date="2009-01" db="EMBL/GenBank/DDBJ databases">
        <title>Complete sequence of Diaphorobacter sp. TPSY.</title>
        <authorList>
            <consortium name="US DOE Joint Genome Institute"/>
            <person name="Lucas S."/>
            <person name="Copeland A."/>
            <person name="Lapidus A."/>
            <person name="Glavina del Rio T."/>
            <person name="Tice H."/>
            <person name="Bruce D."/>
            <person name="Goodwin L."/>
            <person name="Pitluck S."/>
            <person name="Chertkov O."/>
            <person name="Brettin T."/>
            <person name="Detter J.C."/>
            <person name="Han C."/>
            <person name="Larimer F."/>
            <person name="Land M."/>
            <person name="Hauser L."/>
            <person name="Kyrpides N."/>
            <person name="Mikhailova N."/>
            <person name="Coates J.D."/>
        </authorList>
    </citation>
    <scope>NUCLEOTIDE SEQUENCE [LARGE SCALE GENOMIC DNA]</scope>
    <source>
        <strain>TPSY</strain>
    </source>
</reference>
<gene>
    <name evidence="1" type="primary">rplE</name>
    <name type="ordered locus">Dtpsy_0385</name>
</gene>
<sequence>MARLQEIYRDKIAPELVKQFGYTSPMQVPRLTKITLNMGVSEAVADKKIMDNAVADLTKIAGQKPVVTKAKKAIAGFKIREGQAIGCMVTLRGAQMYEFLDRFVTIALPRVRDFRGISGRAFDGRGNYNIGVKEQIIFPEIEYDKVDALRGLNISITTTAKTDEEAKALLTAFRFPFKN</sequence>
<comment type="function">
    <text evidence="1">This is one of the proteins that bind and probably mediate the attachment of the 5S RNA into the large ribosomal subunit, where it forms part of the central protuberance. In the 70S ribosome it contacts protein S13 of the 30S subunit (bridge B1b), connecting the 2 subunits; this bridge is implicated in subunit movement. Contacts the P site tRNA; the 5S rRNA and some of its associated proteins might help stabilize positioning of ribosome-bound tRNAs.</text>
</comment>
<comment type="subunit">
    <text evidence="1">Part of the 50S ribosomal subunit; part of the 5S rRNA/L5/L18/L25 subcomplex. Contacts the 5S rRNA and the P site tRNA. Forms a bridge to the 30S subunit in the 70S ribosome.</text>
</comment>
<comment type="similarity">
    <text evidence="1">Belongs to the universal ribosomal protein uL5 family.</text>
</comment>
<accession>B9MBU9</accession>
<keyword id="KW-1185">Reference proteome</keyword>
<keyword id="KW-0687">Ribonucleoprotein</keyword>
<keyword id="KW-0689">Ribosomal protein</keyword>
<keyword id="KW-0694">RNA-binding</keyword>
<keyword id="KW-0699">rRNA-binding</keyword>
<keyword id="KW-0820">tRNA-binding</keyword>